<evidence type="ECO:0000255" key="1">
    <source>
        <dbReference type="HAMAP-Rule" id="MF_01629"/>
    </source>
</evidence>
<sequence length="218" mass="25559">MSDNDELQQIAHLRREYTKGGLRRRDLPADPLTLFERWLSQACEAKLADPTAMVVATVDEHAQPYQRIVLLKHYDEKGMVFYTNLGSRKAHQIENNPRVSLLFPWHTLERQVMVIGKAERLSTLEVMKYFHSRPRDSQIGAWVSKQSSRISARGILESKFLELKQKFQQGEVPLPSFWGGFRVSLEQIEFWQGGEHRLHDRFLYQRENDAWKIDRLAP</sequence>
<organism>
    <name type="scientific">Escherichia coli (strain SE11)</name>
    <dbReference type="NCBI Taxonomy" id="409438"/>
    <lineage>
        <taxon>Bacteria</taxon>
        <taxon>Pseudomonadati</taxon>
        <taxon>Pseudomonadota</taxon>
        <taxon>Gammaproteobacteria</taxon>
        <taxon>Enterobacterales</taxon>
        <taxon>Enterobacteriaceae</taxon>
        <taxon>Escherichia</taxon>
    </lineage>
</organism>
<gene>
    <name evidence="1" type="primary">pdxH</name>
    <name type="ordered locus">ECSE_1761</name>
</gene>
<feature type="chain" id="PRO_1000186313" description="Pyridoxine/pyridoxamine 5'-phosphate oxidase">
    <location>
        <begin position="1"/>
        <end position="218"/>
    </location>
</feature>
<feature type="binding site" evidence="1">
    <location>
        <begin position="14"/>
        <end position="17"/>
    </location>
    <ligand>
        <name>substrate</name>
    </ligand>
</feature>
<feature type="binding site" evidence="1">
    <location>
        <begin position="67"/>
        <end position="72"/>
    </location>
    <ligand>
        <name>FMN</name>
        <dbReference type="ChEBI" id="CHEBI:58210"/>
    </ligand>
</feature>
<feature type="binding site" evidence="1">
    <location>
        <position position="72"/>
    </location>
    <ligand>
        <name>substrate</name>
    </ligand>
</feature>
<feature type="binding site" evidence="1">
    <location>
        <begin position="82"/>
        <end position="83"/>
    </location>
    <ligand>
        <name>FMN</name>
        <dbReference type="ChEBI" id="CHEBI:58210"/>
    </ligand>
</feature>
<feature type="binding site" evidence="1">
    <location>
        <position position="88"/>
    </location>
    <ligand>
        <name>FMN</name>
        <dbReference type="ChEBI" id="CHEBI:58210"/>
    </ligand>
</feature>
<feature type="binding site" evidence="1">
    <location>
        <position position="89"/>
    </location>
    <ligand>
        <name>FMN</name>
        <dbReference type="ChEBI" id="CHEBI:58210"/>
    </ligand>
</feature>
<feature type="binding site" evidence="1">
    <location>
        <position position="111"/>
    </location>
    <ligand>
        <name>FMN</name>
        <dbReference type="ChEBI" id="CHEBI:58210"/>
    </ligand>
</feature>
<feature type="binding site" evidence="1">
    <location>
        <position position="129"/>
    </location>
    <ligand>
        <name>substrate</name>
    </ligand>
</feature>
<feature type="binding site" evidence="1">
    <location>
        <position position="133"/>
    </location>
    <ligand>
        <name>substrate</name>
    </ligand>
</feature>
<feature type="binding site" evidence="1">
    <location>
        <position position="137"/>
    </location>
    <ligand>
        <name>substrate</name>
    </ligand>
</feature>
<feature type="binding site" evidence="1">
    <location>
        <begin position="146"/>
        <end position="147"/>
    </location>
    <ligand>
        <name>FMN</name>
        <dbReference type="ChEBI" id="CHEBI:58210"/>
    </ligand>
</feature>
<feature type="binding site" evidence="1">
    <location>
        <position position="191"/>
    </location>
    <ligand>
        <name>FMN</name>
        <dbReference type="ChEBI" id="CHEBI:58210"/>
    </ligand>
</feature>
<feature type="binding site" evidence="1">
    <location>
        <begin position="197"/>
        <end position="199"/>
    </location>
    <ligand>
        <name>substrate</name>
    </ligand>
</feature>
<feature type="binding site" evidence="1">
    <location>
        <position position="201"/>
    </location>
    <ligand>
        <name>FMN</name>
        <dbReference type="ChEBI" id="CHEBI:58210"/>
    </ligand>
</feature>
<reference key="1">
    <citation type="journal article" date="2008" name="DNA Res.">
        <title>Complete genome sequence and comparative analysis of the wild-type commensal Escherichia coli strain SE11 isolated from a healthy adult.</title>
        <authorList>
            <person name="Oshima K."/>
            <person name="Toh H."/>
            <person name="Ogura Y."/>
            <person name="Sasamoto H."/>
            <person name="Morita H."/>
            <person name="Park S.-H."/>
            <person name="Ooka T."/>
            <person name="Iyoda S."/>
            <person name="Taylor T.D."/>
            <person name="Hayashi T."/>
            <person name="Itoh K."/>
            <person name="Hattori M."/>
        </authorList>
    </citation>
    <scope>NUCLEOTIDE SEQUENCE [LARGE SCALE GENOMIC DNA]</scope>
    <source>
        <strain>SE11</strain>
    </source>
</reference>
<comment type="function">
    <text evidence="1">Catalyzes the oxidation of either pyridoxine 5'-phosphate (PNP) or pyridoxamine 5'-phosphate (PMP) into pyridoxal 5'-phosphate (PLP).</text>
</comment>
<comment type="catalytic activity">
    <reaction evidence="1">
        <text>pyridoxamine 5'-phosphate + O2 + H2O = pyridoxal 5'-phosphate + H2O2 + NH4(+)</text>
        <dbReference type="Rhea" id="RHEA:15817"/>
        <dbReference type="ChEBI" id="CHEBI:15377"/>
        <dbReference type="ChEBI" id="CHEBI:15379"/>
        <dbReference type="ChEBI" id="CHEBI:16240"/>
        <dbReference type="ChEBI" id="CHEBI:28938"/>
        <dbReference type="ChEBI" id="CHEBI:58451"/>
        <dbReference type="ChEBI" id="CHEBI:597326"/>
        <dbReference type="EC" id="1.4.3.5"/>
    </reaction>
</comment>
<comment type="catalytic activity">
    <reaction evidence="1">
        <text>pyridoxine 5'-phosphate + O2 = pyridoxal 5'-phosphate + H2O2</text>
        <dbReference type="Rhea" id="RHEA:15149"/>
        <dbReference type="ChEBI" id="CHEBI:15379"/>
        <dbReference type="ChEBI" id="CHEBI:16240"/>
        <dbReference type="ChEBI" id="CHEBI:58589"/>
        <dbReference type="ChEBI" id="CHEBI:597326"/>
        <dbReference type="EC" id="1.4.3.5"/>
    </reaction>
</comment>
<comment type="cofactor">
    <cofactor evidence="1">
        <name>FMN</name>
        <dbReference type="ChEBI" id="CHEBI:58210"/>
    </cofactor>
    <text evidence="1">Binds 1 FMN per subunit.</text>
</comment>
<comment type="pathway">
    <text evidence="1">Cofactor metabolism; pyridoxal 5'-phosphate salvage; pyridoxal 5'-phosphate from pyridoxamine 5'-phosphate: step 1/1.</text>
</comment>
<comment type="pathway">
    <text evidence="1">Cofactor metabolism; pyridoxal 5'-phosphate salvage; pyridoxal 5'-phosphate from pyridoxine 5'-phosphate: step 1/1.</text>
</comment>
<comment type="subunit">
    <text evidence="1">Homodimer.</text>
</comment>
<comment type="similarity">
    <text evidence="1">Belongs to the pyridoxamine 5'-phosphate oxidase family.</text>
</comment>
<protein>
    <recommendedName>
        <fullName evidence="1">Pyridoxine/pyridoxamine 5'-phosphate oxidase</fullName>
        <ecNumber evidence="1">1.4.3.5</ecNumber>
    </recommendedName>
    <alternativeName>
        <fullName evidence="1">PNP/PMP oxidase</fullName>
        <shortName evidence="1">PNPOx</shortName>
    </alternativeName>
    <alternativeName>
        <fullName evidence="1">Pyridoxal 5'-phosphate synthase</fullName>
    </alternativeName>
</protein>
<accession>B6IB77</accession>
<proteinExistence type="inferred from homology"/>
<name>PDXH_ECOSE</name>
<dbReference type="EC" id="1.4.3.5" evidence="1"/>
<dbReference type="EMBL" id="AP009240">
    <property type="protein sequence ID" value="BAG77285.1"/>
    <property type="molecule type" value="Genomic_DNA"/>
</dbReference>
<dbReference type="RefSeq" id="WP_001282313.1">
    <property type="nucleotide sequence ID" value="NC_011415.1"/>
</dbReference>
<dbReference type="SMR" id="B6IB77"/>
<dbReference type="GeneID" id="93775792"/>
<dbReference type="KEGG" id="ecy:ECSE_1761"/>
<dbReference type="HOGENOM" id="CLU_032263_2_2_6"/>
<dbReference type="UniPathway" id="UPA01068">
    <property type="reaction ID" value="UER00304"/>
</dbReference>
<dbReference type="UniPathway" id="UPA01068">
    <property type="reaction ID" value="UER00305"/>
</dbReference>
<dbReference type="Proteomes" id="UP000008199">
    <property type="component" value="Chromosome"/>
</dbReference>
<dbReference type="GO" id="GO:0010181">
    <property type="term" value="F:FMN binding"/>
    <property type="evidence" value="ECO:0007669"/>
    <property type="project" value="UniProtKB-UniRule"/>
</dbReference>
<dbReference type="GO" id="GO:0004733">
    <property type="term" value="F:pyridoxamine phosphate oxidase activity"/>
    <property type="evidence" value="ECO:0007669"/>
    <property type="project" value="UniProtKB-UniRule"/>
</dbReference>
<dbReference type="GO" id="GO:0008615">
    <property type="term" value="P:pyridoxine biosynthetic process"/>
    <property type="evidence" value="ECO:0007669"/>
    <property type="project" value="UniProtKB-KW"/>
</dbReference>
<dbReference type="FunFam" id="2.30.110.10:FF:000001">
    <property type="entry name" value="Pyridoxine/pyridoxamine 5'-phosphate oxidase"/>
    <property type="match status" value="1"/>
</dbReference>
<dbReference type="Gene3D" id="2.30.110.10">
    <property type="entry name" value="Electron Transport, Fmn-binding Protein, Chain A"/>
    <property type="match status" value="1"/>
</dbReference>
<dbReference type="HAMAP" id="MF_01629">
    <property type="entry name" value="PdxH"/>
    <property type="match status" value="1"/>
</dbReference>
<dbReference type="InterPro" id="IPR000659">
    <property type="entry name" value="Pyridox_Oxase"/>
</dbReference>
<dbReference type="InterPro" id="IPR019740">
    <property type="entry name" value="Pyridox_Oxase_CS"/>
</dbReference>
<dbReference type="InterPro" id="IPR011576">
    <property type="entry name" value="Pyridox_Oxase_N"/>
</dbReference>
<dbReference type="InterPro" id="IPR019576">
    <property type="entry name" value="Pyridoxamine_oxidase_dimer_C"/>
</dbReference>
<dbReference type="InterPro" id="IPR012349">
    <property type="entry name" value="Split_barrel_FMN-bd"/>
</dbReference>
<dbReference type="NCBIfam" id="TIGR00558">
    <property type="entry name" value="pdxH"/>
    <property type="match status" value="1"/>
</dbReference>
<dbReference type="NCBIfam" id="NF004231">
    <property type="entry name" value="PRK05679.1"/>
    <property type="match status" value="1"/>
</dbReference>
<dbReference type="PANTHER" id="PTHR10851:SF0">
    <property type="entry name" value="PYRIDOXINE-5'-PHOSPHATE OXIDASE"/>
    <property type="match status" value="1"/>
</dbReference>
<dbReference type="PANTHER" id="PTHR10851">
    <property type="entry name" value="PYRIDOXINE-5-PHOSPHATE OXIDASE"/>
    <property type="match status" value="1"/>
</dbReference>
<dbReference type="Pfam" id="PF10590">
    <property type="entry name" value="PNP_phzG_C"/>
    <property type="match status" value="1"/>
</dbReference>
<dbReference type="Pfam" id="PF01243">
    <property type="entry name" value="PNPOx_N"/>
    <property type="match status" value="1"/>
</dbReference>
<dbReference type="PIRSF" id="PIRSF000190">
    <property type="entry name" value="Pyd_amn-ph_oxd"/>
    <property type="match status" value="1"/>
</dbReference>
<dbReference type="SUPFAM" id="SSF50475">
    <property type="entry name" value="FMN-binding split barrel"/>
    <property type="match status" value="1"/>
</dbReference>
<dbReference type="PROSITE" id="PS01064">
    <property type="entry name" value="PYRIDOX_OXIDASE"/>
    <property type="match status" value="1"/>
</dbReference>
<keyword id="KW-0285">Flavoprotein</keyword>
<keyword id="KW-0288">FMN</keyword>
<keyword id="KW-0560">Oxidoreductase</keyword>
<keyword id="KW-0664">Pyridoxine biosynthesis</keyword>